<accession>Q01UR1</accession>
<gene>
    <name evidence="1" type="primary">rlmH</name>
    <name type="ordered locus">Acid_5662</name>
</gene>
<evidence type="ECO:0000255" key="1">
    <source>
        <dbReference type="HAMAP-Rule" id="MF_00658"/>
    </source>
</evidence>
<organism>
    <name type="scientific">Solibacter usitatus (strain Ellin6076)</name>
    <dbReference type="NCBI Taxonomy" id="234267"/>
    <lineage>
        <taxon>Bacteria</taxon>
        <taxon>Pseudomonadati</taxon>
        <taxon>Acidobacteriota</taxon>
        <taxon>Terriglobia</taxon>
        <taxon>Bryobacterales</taxon>
        <taxon>Solibacteraceae</taxon>
        <taxon>Candidatus Solibacter</taxon>
    </lineage>
</organism>
<keyword id="KW-0963">Cytoplasm</keyword>
<keyword id="KW-0489">Methyltransferase</keyword>
<keyword id="KW-0698">rRNA processing</keyword>
<keyword id="KW-0949">S-adenosyl-L-methionine</keyword>
<keyword id="KW-0808">Transferase</keyword>
<comment type="function">
    <text evidence="1">Specifically methylates the pseudouridine at position 1915 (m3Psi1915) in 23S rRNA.</text>
</comment>
<comment type="catalytic activity">
    <reaction evidence="1">
        <text>pseudouridine(1915) in 23S rRNA + S-adenosyl-L-methionine = N(3)-methylpseudouridine(1915) in 23S rRNA + S-adenosyl-L-homocysteine + H(+)</text>
        <dbReference type="Rhea" id="RHEA:42752"/>
        <dbReference type="Rhea" id="RHEA-COMP:10221"/>
        <dbReference type="Rhea" id="RHEA-COMP:10222"/>
        <dbReference type="ChEBI" id="CHEBI:15378"/>
        <dbReference type="ChEBI" id="CHEBI:57856"/>
        <dbReference type="ChEBI" id="CHEBI:59789"/>
        <dbReference type="ChEBI" id="CHEBI:65314"/>
        <dbReference type="ChEBI" id="CHEBI:74486"/>
        <dbReference type="EC" id="2.1.1.177"/>
    </reaction>
</comment>
<comment type="subunit">
    <text evidence="1">Homodimer.</text>
</comment>
<comment type="subcellular location">
    <subcellularLocation>
        <location evidence="1">Cytoplasm</location>
    </subcellularLocation>
</comment>
<comment type="similarity">
    <text evidence="1">Belongs to the RNA methyltransferase RlmH family.</text>
</comment>
<name>RLMH_SOLUE</name>
<dbReference type="EC" id="2.1.1.177" evidence="1"/>
<dbReference type="EMBL" id="CP000473">
    <property type="protein sequence ID" value="ABJ86609.1"/>
    <property type="molecule type" value="Genomic_DNA"/>
</dbReference>
<dbReference type="SMR" id="Q01UR1"/>
<dbReference type="FunCoup" id="Q01UR1">
    <property type="interactions" value="361"/>
</dbReference>
<dbReference type="STRING" id="234267.Acid_5662"/>
<dbReference type="KEGG" id="sus:Acid_5662"/>
<dbReference type="eggNOG" id="COG1576">
    <property type="taxonomic scope" value="Bacteria"/>
</dbReference>
<dbReference type="HOGENOM" id="CLU_100552_1_0_0"/>
<dbReference type="InParanoid" id="Q01UR1"/>
<dbReference type="OrthoDB" id="9806643at2"/>
<dbReference type="GO" id="GO:0005737">
    <property type="term" value="C:cytoplasm"/>
    <property type="evidence" value="ECO:0007669"/>
    <property type="project" value="UniProtKB-SubCell"/>
</dbReference>
<dbReference type="GO" id="GO:0070038">
    <property type="term" value="F:rRNA (pseudouridine-N3-)-methyltransferase activity"/>
    <property type="evidence" value="ECO:0007669"/>
    <property type="project" value="UniProtKB-UniRule"/>
</dbReference>
<dbReference type="CDD" id="cd18081">
    <property type="entry name" value="RlmH-like"/>
    <property type="match status" value="1"/>
</dbReference>
<dbReference type="Gene3D" id="3.40.1280.10">
    <property type="match status" value="1"/>
</dbReference>
<dbReference type="HAMAP" id="MF_00658">
    <property type="entry name" value="23SrRNA_methyltr_H"/>
    <property type="match status" value="1"/>
</dbReference>
<dbReference type="InterPro" id="IPR029028">
    <property type="entry name" value="Alpha/beta_knot_MTases"/>
</dbReference>
<dbReference type="InterPro" id="IPR003742">
    <property type="entry name" value="RlmH-like"/>
</dbReference>
<dbReference type="InterPro" id="IPR029026">
    <property type="entry name" value="tRNA_m1G_MTases_N"/>
</dbReference>
<dbReference type="PANTHER" id="PTHR33603">
    <property type="entry name" value="METHYLTRANSFERASE"/>
    <property type="match status" value="1"/>
</dbReference>
<dbReference type="PANTHER" id="PTHR33603:SF1">
    <property type="entry name" value="RIBOSOMAL RNA LARGE SUBUNIT METHYLTRANSFERASE H"/>
    <property type="match status" value="1"/>
</dbReference>
<dbReference type="Pfam" id="PF02590">
    <property type="entry name" value="SPOUT_MTase"/>
    <property type="match status" value="1"/>
</dbReference>
<dbReference type="PIRSF" id="PIRSF004505">
    <property type="entry name" value="MT_bac"/>
    <property type="match status" value="1"/>
</dbReference>
<dbReference type="SUPFAM" id="SSF75217">
    <property type="entry name" value="alpha/beta knot"/>
    <property type="match status" value="1"/>
</dbReference>
<sequence>MKIYLYFIGKPKDPHANAIAEDFLARAGRYSPCEMREIRPERIDLWTKHPTARKIFLDPAGKPMDSAAFAAMISKGEMEGRDLVFLIGGHDGLPPAWRARADLLVSLSAMTFPHELARAMLAEQIYRGFCTLRNHPYIR</sequence>
<proteinExistence type="inferred from homology"/>
<protein>
    <recommendedName>
        <fullName evidence="1">Ribosomal RNA large subunit methyltransferase H</fullName>
        <ecNumber evidence="1">2.1.1.177</ecNumber>
    </recommendedName>
    <alternativeName>
        <fullName evidence="1">23S rRNA (pseudouridine1915-N3)-methyltransferase</fullName>
    </alternativeName>
    <alternativeName>
        <fullName evidence="1">23S rRNA m3Psi1915 methyltransferase</fullName>
    </alternativeName>
    <alternativeName>
        <fullName evidence="1">rRNA (pseudouridine-N3-)-methyltransferase RlmH</fullName>
    </alternativeName>
</protein>
<feature type="chain" id="PRO_1000061844" description="Ribosomal RNA large subunit methyltransferase H">
    <location>
        <begin position="1"/>
        <end position="139"/>
    </location>
</feature>
<feature type="binding site" evidence="1">
    <location>
        <position position="57"/>
    </location>
    <ligand>
        <name>S-adenosyl-L-methionine</name>
        <dbReference type="ChEBI" id="CHEBI:59789"/>
    </ligand>
</feature>
<feature type="binding site" evidence="1">
    <location>
        <position position="88"/>
    </location>
    <ligand>
        <name>S-adenosyl-L-methionine</name>
        <dbReference type="ChEBI" id="CHEBI:59789"/>
    </ligand>
</feature>
<feature type="binding site" evidence="1">
    <location>
        <begin position="107"/>
        <end position="112"/>
    </location>
    <ligand>
        <name>S-adenosyl-L-methionine</name>
        <dbReference type="ChEBI" id="CHEBI:59789"/>
    </ligand>
</feature>
<reference key="1">
    <citation type="journal article" date="2009" name="Appl. Environ. Microbiol.">
        <title>Three genomes from the phylum Acidobacteria provide insight into the lifestyles of these microorganisms in soils.</title>
        <authorList>
            <person name="Ward N.L."/>
            <person name="Challacombe J.F."/>
            <person name="Janssen P.H."/>
            <person name="Henrissat B."/>
            <person name="Coutinho P.M."/>
            <person name="Wu M."/>
            <person name="Xie G."/>
            <person name="Haft D.H."/>
            <person name="Sait M."/>
            <person name="Badger J."/>
            <person name="Barabote R.D."/>
            <person name="Bradley B."/>
            <person name="Brettin T.S."/>
            <person name="Brinkac L.M."/>
            <person name="Bruce D."/>
            <person name="Creasy T."/>
            <person name="Daugherty S.C."/>
            <person name="Davidsen T.M."/>
            <person name="DeBoy R.T."/>
            <person name="Detter J.C."/>
            <person name="Dodson R.J."/>
            <person name="Durkin A.S."/>
            <person name="Ganapathy A."/>
            <person name="Gwinn-Giglio M."/>
            <person name="Han C.S."/>
            <person name="Khouri H."/>
            <person name="Kiss H."/>
            <person name="Kothari S.P."/>
            <person name="Madupu R."/>
            <person name="Nelson K.E."/>
            <person name="Nelson W.C."/>
            <person name="Paulsen I."/>
            <person name="Penn K."/>
            <person name="Ren Q."/>
            <person name="Rosovitz M.J."/>
            <person name="Selengut J.D."/>
            <person name="Shrivastava S."/>
            <person name="Sullivan S.A."/>
            <person name="Tapia R."/>
            <person name="Thompson L.S."/>
            <person name="Watkins K.L."/>
            <person name="Yang Q."/>
            <person name="Yu C."/>
            <person name="Zafar N."/>
            <person name="Zhou L."/>
            <person name="Kuske C.R."/>
        </authorList>
    </citation>
    <scope>NUCLEOTIDE SEQUENCE [LARGE SCALE GENOMIC DNA]</scope>
    <source>
        <strain>Ellin6076</strain>
    </source>
</reference>